<organism>
    <name type="scientific">Nostoc sp. (strain PCC 7120 / SAG 25.82 / UTEX 2576)</name>
    <dbReference type="NCBI Taxonomy" id="103690"/>
    <lineage>
        <taxon>Bacteria</taxon>
        <taxon>Bacillati</taxon>
        <taxon>Cyanobacteriota</taxon>
        <taxon>Cyanophyceae</taxon>
        <taxon>Nostocales</taxon>
        <taxon>Nostocaceae</taxon>
        <taxon>Nostoc</taxon>
    </lineage>
</organism>
<proteinExistence type="inferred from homology"/>
<comment type="function">
    <text evidence="1">Catalyzes the reversible formation of acyl-phosphate (acyl-PO(4)) from acyl-[acyl-carrier-protein] (acyl-ACP). This enzyme utilizes acyl-ACP as fatty acyl donor, but not acyl-CoA.</text>
</comment>
<comment type="catalytic activity">
    <reaction evidence="1">
        <text>a fatty acyl-[ACP] + phosphate = an acyl phosphate + holo-[ACP]</text>
        <dbReference type="Rhea" id="RHEA:42292"/>
        <dbReference type="Rhea" id="RHEA-COMP:9685"/>
        <dbReference type="Rhea" id="RHEA-COMP:14125"/>
        <dbReference type="ChEBI" id="CHEBI:43474"/>
        <dbReference type="ChEBI" id="CHEBI:59918"/>
        <dbReference type="ChEBI" id="CHEBI:64479"/>
        <dbReference type="ChEBI" id="CHEBI:138651"/>
        <dbReference type="EC" id="2.3.1.274"/>
    </reaction>
</comment>
<comment type="pathway">
    <text evidence="1">Lipid metabolism; phospholipid metabolism.</text>
</comment>
<comment type="subunit">
    <text evidence="1">Homodimer. Probably interacts with PlsY.</text>
</comment>
<comment type="subcellular location">
    <subcellularLocation>
        <location evidence="1">Cytoplasm</location>
    </subcellularLocation>
    <text evidence="1">Associated with the membrane possibly through PlsY.</text>
</comment>
<comment type="similarity">
    <text evidence="1">Belongs to the PlsX family.</text>
</comment>
<sequence length="341" mass="36279">MGSTCVRIAIDAMGGDHAPNEIVAGAVRASEELGVKVLLVGDPQQIASALPPKTNLERVEIVPAEEAIAMDEEPLNAVRRKRKASINVAMDLVKREQADAIFSAGHSGAAMASALLRLGRLPGVDRPAIGTVFPTIKAGKPVLILDVGANVDCRPKFLEQFAVIGSIYSQYVLGTGEPKVGLLNIGEEDTKGNELALRTHQLLKDNSNINFIGNAEGRDVLSGEFDVIVCDGFVGNILLKFAEAIGGVILQILREELPQGLHGQIGTAILKPNLKRIKQRMDHAEHGGALLLGVSGVCLIGHGSSQAPSVFNAIRMAKEAVDNQVMQQLQSQYEILHSTSD</sequence>
<keyword id="KW-0963">Cytoplasm</keyword>
<keyword id="KW-0444">Lipid biosynthesis</keyword>
<keyword id="KW-0443">Lipid metabolism</keyword>
<keyword id="KW-0594">Phospholipid biosynthesis</keyword>
<keyword id="KW-1208">Phospholipid metabolism</keyword>
<keyword id="KW-1185">Reference proteome</keyword>
<keyword id="KW-0808">Transferase</keyword>
<protein>
    <recommendedName>
        <fullName evidence="1">Phosphate acyltransferase</fullName>
        <ecNumber evidence="1">2.3.1.274</ecNumber>
    </recommendedName>
    <alternativeName>
        <fullName evidence="1">Acyl-ACP phosphotransacylase</fullName>
    </alternativeName>
    <alternativeName>
        <fullName evidence="1">Acyl-[acyl-carrier-protein]--phosphate acyltransferase</fullName>
    </alternativeName>
    <alternativeName>
        <fullName evidence="1">Phosphate-acyl-ACP acyltransferase</fullName>
    </alternativeName>
</protein>
<feature type="chain" id="PRO_0000189836" description="Phosphate acyltransferase">
    <location>
        <begin position="1"/>
        <end position="341"/>
    </location>
</feature>
<evidence type="ECO:0000255" key="1">
    <source>
        <dbReference type="HAMAP-Rule" id="MF_00019"/>
    </source>
</evidence>
<gene>
    <name evidence="1" type="primary">plsX</name>
    <name type="ordered locus">alr0238</name>
</gene>
<name>PLSX_NOSS1</name>
<reference key="1">
    <citation type="journal article" date="2001" name="DNA Res.">
        <title>Complete genomic sequence of the filamentous nitrogen-fixing cyanobacterium Anabaena sp. strain PCC 7120.</title>
        <authorList>
            <person name="Kaneko T."/>
            <person name="Nakamura Y."/>
            <person name="Wolk C.P."/>
            <person name="Kuritz T."/>
            <person name="Sasamoto S."/>
            <person name="Watanabe A."/>
            <person name="Iriguchi M."/>
            <person name="Ishikawa A."/>
            <person name="Kawashima K."/>
            <person name="Kimura T."/>
            <person name="Kishida Y."/>
            <person name="Kohara M."/>
            <person name="Matsumoto M."/>
            <person name="Matsuno A."/>
            <person name="Muraki A."/>
            <person name="Nakazaki N."/>
            <person name="Shimpo S."/>
            <person name="Sugimoto M."/>
            <person name="Takazawa M."/>
            <person name="Yamada M."/>
            <person name="Yasuda M."/>
            <person name="Tabata S."/>
        </authorList>
    </citation>
    <scope>NUCLEOTIDE SEQUENCE [LARGE SCALE GENOMIC DNA]</scope>
    <source>
        <strain>PCC 7120 / SAG 25.82 / UTEX 2576</strain>
    </source>
</reference>
<dbReference type="EC" id="2.3.1.274" evidence="1"/>
<dbReference type="EMBL" id="BA000019">
    <property type="protein sequence ID" value="BAB77762.1"/>
    <property type="molecule type" value="Genomic_DNA"/>
</dbReference>
<dbReference type="PIR" id="AF1836">
    <property type="entry name" value="AF1836"/>
</dbReference>
<dbReference type="RefSeq" id="WP_010994415.1">
    <property type="nucleotide sequence ID" value="NZ_RSCN01000026.1"/>
</dbReference>
<dbReference type="SMR" id="Q8Z063"/>
<dbReference type="STRING" id="103690.gene:10492245"/>
<dbReference type="KEGG" id="ana:alr0238"/>
<dbReference type="eggNOG" id="COG0416">
    <property type="taxonomic scope" value="Bacteria"/>
</dbReference>
<dbReference type="OrthoDB" id="9806408at2"/>
<dbReference type="UniPathway" id="UPA00085"/>
<dbReference type="Proteomes" id="UP000002483">
    <property type="component" value="Chromosome"/>
</dbReference>
<dbReference type="GO" id="GO:0005737">
    <property type="term" value="C:cytoplasm"/>
    <property type="evidence" value="ECO:0007669"/>
    <property type="project" value="UniProtKB-SubCell"/>
</dbReference>
<dbReference type="GO" id="GO:0043811">
    <property type="term" value="F:phosphate:acyl-[acyl carrier protein] acyltransferase activity"/>
    <property type="evidence" value="ECO:0007669"/>
    <property type="project" value="UniProtKB-UniRule"/>
</dbReference>
<dbReference type="GO" id="GO:0006633">
    <property type="term" value="P:fatty acid biosynthetic process"/>
    <property type="evidence" value="ECO:0007669"/>
    <property type="project" value="UniProtKB-UniRule"/>
</dbReference>
<dbReference type="GO" id="GO:0008654">
    <property type="term" value="P:phospholipid biosynthetic process"/>
    <property type="evidence" value="ECO:0007669"/>
    <property type="project" value="UniProtKB-KW"/>
</dbReference>
<dbReference type="Gene3D" id="3.40.718.10">
    <property type="entry name" value="Isopropylmalate Dehydrogenase"/>
    <property type="match status" value="1"/>
</dbReference>
<dbReference type="HAMAP" id="MF_00019">
    <property type="entry name" value="PlsX"/>
    <property type="match status" value="1"/>
</dbReference>
<dbReference type="InterPro" id="IPR003664">
    <property type="entry name" value="FA_synthesis"/>
</dbReference>
<dbReference type="InterPro" id="IPR012281">
    <property type="entry name" value="Phospholipid_synth_PlsX-like"/>
</dbReference>
<dbReference type="NCBIfam" id="TIGR00182">
    <property type="entry name" value="plsX"/>
    <property type="match status" value="1"/>
</dbReference>
<dbReference type="PANTHER" id="PTHR30100">
    <property type="entry name" value="FATTY ACID/PHOSPHOLIPID SYNTHESIS PROTEIN PLSX"/>
    <property type="match status" value="1"/>
</dbReference>
<dbReference type="PANTHER" id="PTHR30100:SF1">
    <property type="entry name" value="PHOSPHATE ACYLTRANSFERASE"/>
    <property type="match status" value="1"/>
</dbReference>
<dbReference type="Pfam" id="PF02504">
    <property type="entry name" value="FA_synthesis"/>
    <property type="match status" value="1"/>
</dbReference>
<dbReference type="PIRSF" id="PIRSF002465">
    <property type="entry name" value="Phsphlp_syn_PlsX"/>
    <property type="match status" value="1"/>
</dbReference>
<dbReference type="SUPFAM" id="SSF53659">
    <property type="entry name" value="Isocitrate/Isopropylmalate dehydrogenase-like"/>
    <property type="match status" value="1"/>
</dbReference>
<accession>Q8Z063</accession>